<comment type="function">
    <text evidence="1">Specifically methylates the guanosine in position 1516 of 16S rRNA.</text>
</comment>
<comment type="catalytic activity">
    <reaction evidence="1">
        <text>guanosine(1516) in 16S rRNA + S-adenosyl-L-methionine = N(2)-methylguanosine(1516) in 16S rRNA + S-adenosyl-L-homocysteine + H(+)</text>
        <dbReference type="Rhea" id="RHEA:43220"/>
        <dbReference type="Rhea" id="RHEA-COMP:10412"/>
        <dbReference type="Rhea" id="RHEA-COMP:10413"/>
        <dbReference type="ChEBI" id="CHEBI:15378"/>
        <dbReference type="ChEBI" id="CHEBI:57856"/>
        <dbReference type="ChEBI" id="CHEBI:59789"/>
        <dbReference type="ChEBI" id="CHEBI:74269"/>
        <dbReference type="ChEBI" id="CHEBI:74481"/>
        <dbReference type="EC" id="2.1.1.242"/>
    </reaction>
</comment>
<comment type="subcellular location">
    <subcellularLocation>
        <location evidence="1">Cytoplasm</location>
    </subcellularLocation>
</comment>
<comment type="similarity">
    <text evidence="1">Belongs to the methyltransferase superfamily. RsmJ family.</text>
</comment>
<sequence length="254" mass="28311">MNDTLAITYSTPARLSEAEKLARQMKLPLVSLNSTDYSFLLVFTPAHLELRSTGTKAPGPLYVDFLKGATAHRRLFGGGRSQLIVRAVGLKSHPHPTILDLTAGLGRDAFVLANLGCDVLMIERNPVIALLLRDGLERAQSVEWFKSLKLELIEIDAQIYLSTLKKQFDVIYMDPMYPIRKKSALVKKEMRILRRLVGADDDAPQLLALALKKAKHRVVIKRPRLSNPLPGPAPDVVYEGKSSRFDVYLLKPSS</sequence>
<proteinExistence type="inferred from homology"/>
<dbReference type="EC" id="2.1.1.242" evidence="1"/>
<dbReference type="EMBL" id="CP001019">
    <property type="protein sequence ID" value="ACJ17692.1"/>
    <property type="molecule type" value="Genomic_DNA"/>
</dbReference>
<dbReference type="RefSeq" id="WP_005770277.1">
    <property type="nucleotide sequence ID" value="NC_011527.1"/>
</dbReference>
<dbReference type="SMR" id="B6J3G6"/>
<dbReference type="KEGG" id="cbg:CbuG_0251"/>
<dbReference type="HOGENOM" id="CLU_076324_0_1_6"/>
<dbReference type="GO" id="GO:0005737">
    <property type="term" value="C:cytoplasm"/>
    <property type="evidence" value="ECO:0007669"/>
    <property type="project" value="UniProtKB-SubCell"/>
</dbReference>
<dbReference type="GO" id="GO:0008990">
    <property type="term" value="F:rRNA (guanine-N2-)-methyltransferase activity"/>
    <property type="evidence" value="ECO:0007669"/>
    <property type="project" value="UniProtKB-UniRule"/>
</dbReference>
<dbReference type="CDD" id="cd02440">
    <property type="entry name" value="AdoMet_MTases"/>
    <property type="match status" value="1"/>
</dbReference>
<dbReference type="Gene3D" id="3.40.50.150">
    <property type="entry name" value="Vaccinia Virus protein VP39"/>
    <property type="match status" value="1"/>
</dbReference>
<dbReference type="HAMAP" id="MF_01523">
    <property type="entry name" value="16SrRNA_methyltr_J"/>
    <property type="match status" value="1"/>
</dbReference>
<dbReference type="InterPro" id="IPR007536">
    <property type="entry name" value="16SrRNA_methylTrfase_J"/>
</dbReference>
<dbReference type="InterPro" id="IPR029063">
    <property type="entry name" value="SAM-dependent_MTases_sf"/>
</dbReference>
<dbReference type="PANTHER" id="PTHR36112">
    <property type="entry name" value="RIBOSOMAL RNA SMALL SUBUNIT METHYLTRANSFERASE J"/>
    <property type="match status" value="1"/>
</dbReference>
<dbReference type="PANTHER" id="PTHR36112:SF1">
    <property type="entry name" value="RIBOSOMAL RNA SMALL SUBUNIT METHYLTRANSFERASE J"/>
    <property type="match status" value="1"/>
</dbReference>
<dbReference type="Pfam" id="PF04445">
    <property type="entry name" value="SAM_MT"/>
    <property type="match status" value="1"/>
</dbReference>
<dbReference type="SUPFAM" id="SSF53335">
    <property type="entry name" value="S-adenosyl-L-methionine-dependent methyltransferases"/>
    <property type="match status" value="1"/>
</dbReference>
<gene>
    <name evidence="1" type="primary">rsmJ</name>
    <name type="ordered locus">CbuG_0251</name>
</gene>
<protein>
    <recommendedName>
        <fullName evidence="1">Ribosomal RNA small subunit methyltransferase J</fullName>
        <ecNumber evidence="1">2.1.1.242</ecNumber>
    </recommendedName>
    <alternativeName>
        <fullName evidence="1">16S rRNA m2G1516 methyltransferase</fullName>
    </alternativeName>
    <alternativeName>
        <fullName evidence="1">rRNA (guanine-N(2)-)-methyltransferase</fullName>
    </alternativeName>
</protein>
<keyword id="KW-0963">Cytoplasm</keyword>
<keyword id="KW-0489">Methyltransferase</keyword>
<keyword id="KW-0698">rRNA processing</keyword>
<keyword id="KW-0949">S-adenosyl-L-methionine</keyword>
<keyword id="KW-0808">Transferase</keyword>
<accession>B6J3G6</accession>
<evidence type="ECO:0000255" key="1">
    <source>
        <dbReference type="HAMAP-Rule" id="MF_01523"/>
    </source>
</evidence>
<name>RSMJ_COXB2</name>
<reference key="1">
    <citation type="journal article" date="2009" name="Infect. Immun.">
        <title>Comparative genomics reveal extensive transposon-mediated genomic plasticity and diversity among potential effector proteins within the genus Coxiella.</title>
        <authorList>
            <person name="Beare P.A."/>
            <person name="Unsworth N."/>
            <person name="Andoh M."/>
            <person name="Voth D.E."/>
            <person name="Omsland A."/>
            <person name="Gilk S.D."/>
            <person name="Williams K.P."/>
            <person name="Sobral B.W."/>
            <person name="Kupko J.J. III"/>
            <person name="Porcella S.F."/>
            <person name="Samuel J.E."/>
            <person name="Heinzen R.A."/>
        </authorList>
    </citation>
    <scope>NUCLEOTIDE SEQUENCE [LARGE SCALE GENOMIC DNA]</scope>
    <source>
        <strain>CbuG_Q212</strain>
    </source>
</reference>
<organism>
    <name type="scientific">Coxiella burnetii (strain CbuG_Q212)</name>
    <name type="common">Coxiella burnetii (strain Q212)</name>
    <dbReference type="NCBI Taxonomy" id="434923"/>
    <lineage>
        <taxon>Bacteria</taxon>
        <taxon>Pseudomonadati</taxon>
        <taxon>Pseudomonadota</taxon>
        <taxon>Gammaproteobacteria</taxon>
        <taxon>Legionellales</taxon>
        <taxon>Coxiellaceae</taxon>
        <taxon>Coxiella</taxon>
    </lineage>
</organism>
<feature type="chain" id="PRO_1000198488" description="Ribosomal RNA small subunit methyltransferase J">
    <location>
        <begin position="1"/>
        <end position="254"/>
    </location>
</feature>
<feature type="binding site" evidence="1">
    <location>
        <begin position="107"/>
        <end position="108"/>
    </location>
    <ligand>
        <name>S-adenosyl-L-methionine</name>
        <dbReference type="ChEBI" id="CHEBI:59789"/>
    </ligand>
</feature>
<feature type="binding site" evidence="1">
    <location>
        <begin position="123"/>
        <end position="124"/>
    </location>
    <ligand>
        <name>S-adenosyl-L-methionine</name>
        <dbReference type="ChEBI" id="CHEBI:59789"/>
    </ligand>
</feature>
<feature type="binding site" evidence="1">
    <location>
        <position position="174"/>
    </location>
    <ligand>
        <name>S-adenosyl-L-methionine</name>
        <dbReference type="ChEBI" id="CHEBI:59789"/>
    </ligand>
</feature>